<evidence type="ECO:0000250" key="1"/>
<evidence type="ECO:0000269" key="2">
    <source>
    </source>
</evidence>
<evidence type="ECO:0000269" key="3">
    <source>
    </source>
</evidence>
<evidence type="ECO:0000269" key="4">
    <source>
    </source>
</evidence>
<evidence type="ECO:0000269" key="5">
    <source>
    </source>
</evidence>
<evidence type="ECO:0000269" key="6">
    <source>
    </source>
</evidence>
<evidence type="ECO:0000305" key="7"/>
<evidence type="ECO:0007744" key="8">
    <source>
    </source>
</evidence>
<evidence type="ECO:0007829" key="9">
    <source>
        <dbReference type="PDB" id="4G1P"/>
    </source>
</evidence>
<gene>
    <name type="primary">DUG1</name>
    <name type="ordered locus">YFR044C</name>
</gene>
<protein>
    <recommendedName>
        <fullName>Cys-Gly metallodipeptidase DUG1</fullName>
        <ecNumber>3.4.13.-</ecNumber>
    </recommendedName>
    <alternativeName>
        <fullName>Deficient in utilization of glutathione protein 1</fullName>
    </alternativeName>
    <alternativeName>
        <fullName>GSH degradosomal complex subunit DUG1</fullName>
    </alternativeName>
</protein>
<name>DUG1_YEAST</name>
<proteinExistence type="evidence at protein level"/>
<reference key="1">
    <citation type="journal article" date="1995" name="Nat. Genet.">
        <title>Analysis of the nucleotide sequence of chromosome VI from Saccharomyces cerevisiae.</title>
        <authorList>
            <person name="Murakami Y."/>
            <person name="Naitou M."/>
            <person name="Hagiwara H."/>
            <person name="Shibata T."/>
            <person name="Ozawa M."/>
            <person name="Sasanuma S."/>
            <person name="Sasanuma M."/>
            <person name="Tsuchiya Y."/>
            <person name="Soeda E."/>
            <person name="Yokoyama K."/>
            <person name="Yamazaki M."/>
            <person name="Tashiro H."/>
            <person name="Eki T."/>
        </authorList>
    </citation>
    <scope>NUCLEOTIDE SEQUENCE [LARGE SCALE GENOMIC DNA]</scope>
    <source>
        <strain>ATCC 204508 / S288c</strain>
    </source>
</reference>
<reference key="2">
    <citation type="journal article" date="2014" name="G3 (Bethesda)">
        <title>The reference genome sequence of Saccharomyces cerevisiae: Then and now.</title>
        <authorList>
            <person name="Engel S.R."/>
            <person name="Dietrich F.S."/>
            <person name="Fisk D.G."/>
            <person name="Binkley G."/>
            <person name="Balakrishnan R."/>
            <person name="Costanzo M.C."/>
            <person name="Dwight S.S."/>
            <person name="Hitz B.C."/>
            <person name="Karra K."/>
            <person name="Nash R.S."/>
            <person name="Weng S."/>
            <person name="Wong E.D."/>
            <person name="Lloyd P."/>
            <person name="Skrzypek M.S."/>
            <person name="Miyasato S.R."/>
            <person name="Simison M."/>
            <person name="Cherry J.M."/>
        </authorList>
    </citation>
    <scope>GENOME REANNOTATION</scope>
    <source>
        <strain>ATCC 204508 / S288c</strain>
    </source>
</reference>
<reference key="3">
    <citation type="journal article" date="1996" name="Yeast">
        <title>Analysis of a 36.2 kb DNA sequence including the right telomere of chromosome VI from Saccharomyces cerevisiae.</title>
        <authorList>
            <person name="Eki T."/>
            <person name="Naitou M."/>
            <person name="Hagiwara H."/>
            <person name="Ozawa M."/>
            <person name="Sasanuma S."/>
            <person name="Sasanuma M."/>
            <person name="Tsuchiya Y."/>
            <person name="Shibata T."/>
            <person name="Hanaoka F."/>
            <person name="Murakami Y."/>
        </authorList>
    </citation>
    <scope>NUCLEOTIDE SEQUENCE [GENOMIC DNA]</scope>
    <source>
        <strain>ATCC 204511 / S288c / AB972</strain>
    </source>
</reference>
<reference key="4">
    <citation type="journal article" date="2007" name="Genome Res.">
        <title>Approaching a complete repository of sequence-verified protein-encoding clones for Saccharomyces cerevisiae.</title>
        <authorList>
            <person name="Hu Y."/>
            <person name="Rolfs A."/>
            <person name="Bhullar B."/>
            <person name="Murthy T.V.S."/>
            <person name="Zhu C."/>
            <person name="Berger M.F."/>
            <person name="Camargo A.A."/>
            <person name="Kelley F."/>
            <person name="McCarron S."/>
            <person name="Jepson D."/>
            <person name="Richardson A."/>
            <person name="Raphael J."/>
            <person name="Moreira D."/>
            <person name="Taycher E."/>
            <person name="Zuo D."/>
            <person name="Mohr S."/>
            <person name="Kane M.F."/>
            <person name="Williamson J."/>
            <person name="Simpson A.J.G."/>
            <person name="Bulyk M.L."/>
            <person name="Harlow E."/>
            <person name="Marsischky G."/>
            <person name="Kolodner R.D."/>
            <person name="LaBaer J."/>
        </authorList>
    </citation>
    <scope>NUCLEOTIDE SEQUENCE [GENOMIC DNA]</scope>
    <source>
        <strain>ATCC 204508 / S288c</strain>
    </source>
</reference>
<reference key="5">
    <citation type="journal article" date="1996" name="Proc. Natl. Acad. Sci. U.S.A.">
        <title>Linking genome and proteome by mass spectrometry: large-scale identification of yeast proteins from two dimensional gels.</title>
        <authorList>
            <person name="Shevchenko A."/>
            <person name="Jensen O.N."/>
            <person name="Podtelejnikov A.V."/>
            <person name="Sagliocco F."/>
            <person name="Wilm M."/>
            <person name="Vorm O."/>
            <person name="Mortensen P."/>
            <person name="Shevchenko A."/>
            <person name="Boucherie H."/>
            <person name="Mann M."/>
        </authorList>
    </citation>
    <scope>IDENTIFICATION BY MASS SPECTROMETRY</scope>
</reference>
<reference key="6">
    <citation type="journal article" date="2003" name="Nature">
        <title>Global analysis of protein localization in budding yeast.</title>
        <authorList>
            <person name="Huh W.-K."/>
            <person name="Falvo J.V."/>
            <person name="Gerke L.C."/>
            <person name="Carroll A.S."/>
            <person name="Howson R.W."/>
            <person name="Weissman J.S."/>
            <person name="O'Shea E.K."/>
        </authorList>
    </citation>
    <scope>SUBCELLULAR LOCATION [LARGE SCALE ANALYSIS]</scope>
</reference>
<reference key="7">
    <citation type="journal article" date="2003" name="Nature">
        <title>Global analysis of protein expression in yeast.</title>
        <authorList>
            <person name="Ghaemmaghami S."/>
            <person name="Huh W.-K."/>
            <person name="Bower K."/>
            <person name="Howson R.W."/>
            <person name="Belle A."/>
            <person name="Dephoure N."/>
            <person name="O'Shea E.K."/>
            <person name="Weissman J.S."/>
        </authorList>
    </citation>
    <scope>LEVEL OF PROTEIN EXPRESSION [LARGE SCALE ANALYSIS]</scope>
</reference>
<reference key="8">
    <citation type="journal article" date="2006" name="J. Proteome Res.">
        <title>Toward the complete yeast mitochondrial proteome: multidimensional separation techniques for mitochondrial proteomics.</title>
        <authorList>
            <person name="Reinders J."/>
            <person name="Zahedi R.P."/>
            <person name="Pfanner N."/>
            <person name="Meisinger C."/>
            <person name="Sickmann A."/>
        </authorList>
    </citation>
    <scope>SUBCELLULAR LOCATION [LARGE SCALE ANALYSIS]</scope>
    <scope>IDENTIFICATION BY MASS SPECTROMETRY</scope>
</reference>
<reference key="9">
    <citation type="journal article" date="2007" name="Genetics">
        <title>The alternative pathway of glutathione degradation is mediated by a novel protein complex involving three new genes in Saccharomyces cerevisiae.</title>
        <authorList>
            <person name="Ganguli D."/>
            <person name="Kumar C."/>
            <person name="Bachhawat A.K."/>
        </authorList>
    </citation>
    <scope>FUNCTION</scope>
    <scope>IDENTIFICATION IN THE GSH DEGRADOSOMAL COMPLEX</scope>
    <scope>SUBCELLULAR LOCATION</scope>
</reference>
<reference key="10">
    <citation type="journal article" date="2008" name="Mol. Cell. Proteomics">
        <title>A multidimensional chromatography technology for in-depth phosphoproteome analysis.</title>
        <authorList>
            <person name="Albuquerque C.P."/>
            <person name="Smolka M.B."/>
            <person name="Payne S.H."/>
            <person name="Bafna V."/>
            <person name="Eng J."/>
            <person name="Zhou H."/>
        </authorList>
    </citation>
    <scope>PHOSPHORYLATION [LARGE SCALE ANALYSIS] AT SER-451</scope>
    <scope>IDENTIFICATION BY MASS SPECTROMETRY [LARGE SCALE ANALYSIS]</scope>
</reference>
<reference key="11">
    <citation type="journal article" date="2009" name="J. Biol. Chem.">
        <title>Dug1p Is a Cys-Gly peptidase of the gamma-glutamyl cycle of Saccharomyces cerevisiae and represents a novel family of Cys-Gly peptidases.</title>
        <authorList>
            <person name="Kaur H."/>
            <person name="Kumar C."/>
            <person name="Junot C."/>
            <person name="Toledano M.B."/>
            <person name="Bachhawat A.K."/>
        </authorList>
    </citation>
    <scope>SUBUNIT</scope>
    <scope>FUNCTION</scope>
    <scope>COFACTOR</scope>
    <scope>DISRUPTION PHENOTYPE</scope>
</reference>
<comment type="function">
    <text evidence="5 6">Catalytic component of the GSH degradosomal complex involved in the degradation of glutathione (GSH) and other peptides containing a gamma-glu-X bond. Also functions in a DUG2-DUG3-independent manner as a dipeptidase with high specificity for Cys-Gly and no activity toward tri- or tetrapeptides.</text>
</comment>
<comment type="cofactor">
    <cofactor evidence="6">
        <name>Zn(2+)</name>
        <dbReference type="ChEBI" id="CHEBI:29105"/>
    </cofactor>
    <cofactor evidence="6">
        <name>Mn(2+)</name>
        <dbReference type="ChEBI" id="CHEBI:29035"/>
    </cofactor>
</comment>
<comment type="biophysicochemical properties">
    <kinetics>
        <KM>0.4 mM for Cys-Gly (at pH 8.0 and in the presence of 20 uM manganese ions)</KM>
        <KM>0.8 mM for Cys-Gly (at pH 8.0 and in the presence of 200 uM zinc ions)</KM>
    </kinetics>
</comment>
<comment type="subunit">
    <text evidence="5 6">Homodimer. Component of the GSH degradosomal complex composed of at least DUG1, DUG2 and DUG3.</text>
</comment>
<comment type="interaction">
    <interactant intactId="EBI-5137">
        <id>P43616</id>
    </interactant>
    <interactant intactId="EBI-5137">
        <id>P43616</id>
        <label>DUG1</label>
    </interactant>
    <organismsDiffer>false</organismsDiffer>
    <experiments>2</experiments>
</comment>
<comment type="subcellular location">
    <subcellularLocation>
        <location evidence="2 5">Cytoplasm</location>
    </subcellularLocation>
    <subcellularLocation>
        <location evidence="4">Mitochondrion</location>
    </subcellularLocation>
</comment>
<comment type="disruption phenotype">
    <text evidence="6">Accumulation of Cys-Gly dipeptide and enhanced GSH toxicity.</text>
</comment>
<comment type="miscellaneous">
    <text evidence="3">Present with 22300 molecules/cell in log phase SD medium.</text>
</comment>
<comment type="similarity">
    <text evidence="7">Belongs to the peptidase M20A family.</text>
</comment>
<organism>
    <name type="scientific">Saccharomyces cerevisiae (strain ATCC 204508 / S288c)</name>
    <name type="common">Baker's yeast</name>
    <dbReference type="NCBI Taxonomy" id="559292"/>
    <lineage>
        <taxon>Eukaryota</taxon>
        <taxon>Fungi</taxon>
        <taxon>Dikarya</taxon>
        <taxon>Ascomycota</taxon>
        <taxon>Saccharomycotina</taxon>
        <taxon>Saccharomycetes</taxon>
        <taxon>Saccharomycetales</taxon>
        <taxon>Saccharomycetaceae</taxon>
        <taxon>Saccharomyces</taxon>
    </lineage>
</organism>
<accession>P43616</accession>
<accession>D6VTS7</accession>
<feature type="chain" id="PRO_0000185275" description="Cys-Gly metallodipeptidase DUG1">
    <location>
        <begin position="1"/>
        <end position="481"/>
    </location>
</feature>
<feature type="active site" evidence="1">
    <location>
        <position position="104"/>
    </location>
</feature>
<feature type="active site" description="Proton acceptor" evidence="1">
    <location>
        <position position="171"/>
    </location>
</feature>
<feature type="binding site" evidence="1">
    <location>
        <position position="102"/>
    </location>
    <ligand>
        <name>Zn(2+)</name>
        <dbReference type="ChEBI" id="CHEBI:29105"/>
        <label>2</label>
    </ligand>
</feature>
<feature type="binding site" evidence="1">
    <location>
        <position position="137"/>
    </location>
    <ligand>
        <name>Zn(2+)</name>
        <dbReference type="ChEBI" id="CHEBI:29105"/>
        <label>1</label>
    </ligand>
</feature>
<feature type="binding site" evidence="1">
    <location>
        <position position="137"/>
    </location>
    <ligand>
        <name>Zn(2+)</name>
        <dbReference type="ChEBI" id="CHEBI:29105"/>
        <label>2</label>
    </ligand>
</feature>
<feature type="binding site" evidence="1">
    <location>
        <position position="172"/>
    </location>
    <ligand>
        <name>Zn(2+)</name>
        <dbReference type="ChEBI" id="CHEBI:29105"/>
        <label>1</label>
    </ligand>
</feature>
<feature type="binding site" evidence="1">
    <location>
        <position position="200"/>
    </location>
    <ligand>
        <name>Zn(2+)</name>
        <dbReference type="ChEBI" id="CHEBI:29105"/>
        <label>2</label>
    </ligand>
</feature>
<feature type="binding site" evidence="1">
    <location>
        <position position="450"/>
    </location>
    <ligand>
        <name>Zn(2+)</name>
        <dbReference type="ChEBI" id="CHEBI:29105"/>
        <label>1</label>
    </ligand>
</feature>
<feature type="modified residue" description="Phosphoserine" evidence="8">
    <location>
        <position position="451"/>
    </location>
</feature>
<feature type="helix" evidence="9">
    <location>
        <begin position="5"/>
        <end position="14"/>
    </location>
</feature>
<feature type="helix" evidence="9">
    <location>
        <begin position="16"/>
        <end position="28"/>
    </location>
</feature>
<feature type="helix" evidence="9">
    <location>
        <begin position="36"/>
        <end position="38"/>
    </location>
</feature>
<feature type="helix" evidence="9">
    <location>
        <begin position="39"/>
        <end position="55"/>
    </location>
</feature>
<feature type="strand" evidence="9">
    <location>
        <begin position="59"/>
        <end position="64"/>
    </location>
</feature>
<feature type="strand" evidence="9">
    <location>
        <begin position="83"/>
        <end position="88"/>
    </location>
</feature>
<feature type="strand" evidence="9">
    <location>
        <begin position="96"/>
        <end position="102"/>
    </location>
</feature>
<feature type="helix" evidence="9">
    <location>
        <begin position="110"/>
        <end position="112"/>
    </location>
</feature>
<feature type="strand" evidence="9">
    <location>
        <begin position="122"/>
        <end position="124"/>
    </location>
</feature>
<feature type="turn" evidence="9">
    <location>
        <begin position="125"/>
        <end position="128"/>
    </location>
</feature>
<feature type="strand" evidence="9">
    <location>
        <begin position="129"/>
        <end position="131"/>
    </location>
</feature>
<feature type="turn" evidence="9">
    <location>
        <begin position="133"/>
        <end position="138"/>
    </location>
</feature>
<feature type="helix" evidence="9">
    <location>
        <begin position="139"/>
        <end position="154"/>
    </location>
</feature>
<feature type="strand" evidence="9">
    <location>
        <begin position="161"/>
        <end position="169"/>
    </location>
</feature>
<feature type="helix" evidence="9">
    <location>
        <begin position="171"/>
        <end position="173"/>
    </location>
</feature>
<feature type="turn" evidence="9">
    <location>
        <begin position="174"/>
        <end position="177"/>
    </location>
</feature>
<feature type="helix" evidence="9">
    <location>
        <begin position="178"/>
        <end position="185"/>
    </location>
</feature>
<feature type="turn" evidence="9">
    <location>
        <begin position="186"/>
        <end position="192"/>
    </location>
</feature>
<feature type="strand" evidence="9">
    <location>
        <begin position="195"/>
        <end position="198"/>
    </location>
</feature>
<feature type="strand" evidence="9">
    <location>
        <begin position="204"/>
        <end position="208"/>
    </location>
</feature>
<feature type="strand" evidence="9">
    <location>
        <begin position="210"/>
        <end position="215"/>
    </location>
</feature>
<feature type="strand" evidence="9">
    <location>
        <begin position="217"/>
        <end position="226"/>
    </location>
</feature>
<feature type="strand" evidence="9">
    <location>
        <begin position="228"/>
        <end position="230"/>
    </location>
</feature>
<feature type="turn" evidence="9">
    <location>
        <begin position="234"/>
        <end position="236"/>
    </location>
</feature>
<feature type="turn" evidence="9">
    <location>
        <begin position="238"/>
        <end position="240"/>
    </location>
</feature>
<feature type="helix" evidence="9">
    <location>
        <begin position="244"/>
        <end position="252"/>
    </location>
</feature>
<feature type="helix" evidence="9">
    <location>
        <begin position="267"/>
        <end position="270"/>
    </location>
</feature>
<feature type="helix" evidence="9">
    <location>
        <begin position="276"/>
        <end position="281"/>
    </location>
</feature>
<feature type="turn" evidence="9">
    <location>
        <begin position="282"/>
        <end position="284"/>
    </location>
</feature>
<feature type="helix" evidence="9">
    <location>
        <begin position="289"/>
        <end position="296"/>
    </location>
</feature>
<feature type="helix" evidence="9">
    <location>
        <begin position="306"/>
        <end position="314"/>
    </location>
</feature>
<feature type="strand" evidence="9">
    <location>
        <begin position="318"/>
        <end position="327"/>
    </location>
</feature>
<feature type="strand" evidence="9">
    <location>
        <begin position="330"/>
        <end position="332"/>
    </location>
</feature>
<feature type="strand" evidence="9">
    <location>
        <begin position="339"/>
        <end position="349"/>
    </location>
</feature>
<feature type="helix" evidence="9">
    <location>
        <begin position="355"/>
        <end position="371"/>
    </location>
</feature>
<feature type="strand" evidence="9">
    <location>
        <begin position="376"/>
        <end position="387"/>
    </location>
</feature>
<feature type="helix" evidence="9">
    <location>
        <begin position="397"/>
        <end position="410"/>
    </location>
</feature>
<feature type="strand" evidence="9">
    <location>
        <begin position="415"/>
        <end position="421"/>
    </location>
</feature>
<feature type="helix" evidence="9">
    <location>
        <begin position="426"/>
        <end position="433"/>
    </location>
</feature>
<feature type="strand" evidence="9">
    <location>
        <begin position="437"/>
        <end position="439"/>
    </location>
</feature>
<feature type="strand" evidence="9">
    <location>
        <begin position="451"/>
        <end position="453"/>
    </location>
</feature>
<feature type="strand" evidence="9">
    <location>
        <begin position="455"/>
        <end position="457"/>
    </location>
</feature>
<feature type="helix" evidence="9">
    <location>
        <begin position="458"/>
        <end position="477"/>
    </location>
</feature>
<dbReference type="EC" id="3.4.13.-"/>
<dbReference type="EMBL" id="D50617">
    <property type="protein sequence ID" value="BAA09283.1"/>
    <property type="molecule type" value="Genomic_DNA"/>
</dbReference>
<dbReference type="EMBL" id="AY692702">
    <property type="protein sequence ID" value="AAT92721.1"/>
    <property type="molecule type" value="Genomic_DNA"/>
</dbReference>
<dbReference type="EMBL" id="BK006940">
    <property type="protein sequence ID" value="DAA12487.1"/>
    <property type="molecule type" value="Genomic_DNA"/>
</dbReference>
<dbReference type="PIR" id="S56299">
    <property type="entry name" value="S56299"/>
</dbReference>
<dbReference type="RefSeq" id="NP_116702.1">
    <property type="nucleotide sequence ID" value="NM_001180009.1"/>
</dbReference>
<dbReference type="PDB" id="4G1P">
    <property type="method" value="X-ray"/>
    <property type="resolution" value="2.55 A"/>
    <property type="chains" value="A=1-481"/>
</dbReference>
<dbReference type="PDBsum" id="4G1P"/>
<dbReference type="SMR" id="P43616"/>
<dbReference type="BioGRID" id="31202">
    <property type="interactions" value="67"/>
</dbReference>
<dbReference type="DIP" id="DIP-6492N"/>
<dbReference type="FunCoup" id="P43616">
    <property type="interactions" value="465"/>
</dbReference>
<dbReference type="IntAct" id="P43616">
    <property type="interactions" value="12"/>
</dbReference>
<dbReference type="MINT" id="P43616"/>
<dbReference type="STRING" id="4932.YFR044C"/>
<dbReference type="MEROPS" id="M20.017"/>
<dbReference type="iPTMnet" id="P43616"/>
<dbReference type="PaxDb" id="4932-YFR044C"/>
<dbReference type="PeptideAtlas" id="P43616"/>
<dbReference type="EnsemblFungi" id="YFR044C_mRNA">
    <property type="protein sequence ID" value="YFR044C"/>
    <property type="gene ID" value="YFR044C"/>
</dbReference>
<dbReference type="GeneID" id="850605"/>
<dbReference type="KEGG" id="sce:YFR044C"/>
<dbReference type="AGR" id="SGD:S000001940"/>
<dbReference type="SGD" id="S000001940">
    <property type="gene designation" value="DUG1"/>
</dbReference>
<dbReference type="VEuPathDB" id="FungiDB:YFR044C"/>
<dbReference type="eggNOG" id="KOG2276">
    <property type="taxonomic scope" value="Eukaryota"/>
</dbReference>
<dbReference type="GeneTree" id="ENSGT00940000174652"/>
<dbReference type="HOGENOM" id="CLU_029469_3_0_1"/>
<dbReference type="InParanoid" id="P43616"/>
<dbReference type="OMA" id="CNVKFMI"/>
<dbReference type="OrthoDB" id="7832001at2759"/>
<dbReference type="BioCyc" id="MetaCyc:MONOMER3O-4"/>
<dbReference type="BioCyc" id="YEAST:MONOMER3O-4"/>
<dbReference type="Reactome" id="R-SCE-174403">
    <property type="pathway name" value="Glutathione synthesis and recycling"/>
</dbReference>
<dbReference type="Reactome" id="R-SCE-9753281">
    <property type="pathway name" value="Paracetamol ADME"/>
</dbReference>
<dbReference type="SABIO-RK" id="P43616"/>
<dbReference type="BioGRID-ORCS" id="850605">
    <property type="hits" value="4 hits in 10 CRISPR screens"/>
</dbReference>
<dbReference type="EvolutionaryTrace" id="P43616"/>
<dbReference type="PRO" id="PR:P43616"/>
<dbReference type="Proteomes" id="UP000002311">
    <property type="component" value="Chromosome VI"/>
</dbReference>
<dbReference type="RNAct" id="P43616">
    <property type="molecule type" value="protein"/>
</dbReference>
<dbReference type="GO" id="GO:0005737">
    <property type="term" value="C:cytoplasm"/>
    <property type="evidence" value="ECO:0000314"/>
    <property type="project" value="SGD"/>
</dbReference>
<dbReference type="GO" id="GO:0005739">
    <property type="term" value="C:mitochondrion"/>
    <property type="evidence" value="ECO:0007005"/>
    <property type="project" value="SGD"/>
</dbReference>
<dbReference type="GO" id="GO:0042802">
    <property type="term" value="F:identical protein binding"/>
    <property type="evidence" value="ECO:0000353"/>
    <property type="project" value="IntAct"/>
</dbReference>
<dbReference type="GO" id="GO:0046872">
    <property type="term" value="F:metal ion binding"/>
    <property type="evidence" value="ECO:0007669"/>
    <property type="project" value="UniProtKB-KW"/>
</dbReference>
<dbReference type="GO" id="GO:0070573">
    <property type="term" value="F:metallodipeptidase activity"/>
    <property type="evidence" value="ECO:0000314"/>
    <property type="project" value="SGD"/>
</dbReference>
<dbReference type="GO" id="GO:0008242">
    <property type="term" value="F:omega peptidase activity"/>
    <property type="evidence" value="ECO:0000316"/>
    <property type="project" value="SGD"/>
</dbReference>
<dbReference type="GO" id="GO:0008233">
    <property type="term" value="F:peptidase activity"/>
    <property type="evidence" value="ECO:0000318"/>
    <property type="project" value="GO_Central"/>
</dbReference>
<dbReference type="GO" id="GO:0006751">
    <property type="term" value="P:glutathione catabolic process"/>
    <property type="evidence" value="ECO:0000315"/>
    <property type="project" value="SGD"/>
</dbReference>
<dbReference type="GO" id="GO:0006508">
    <property type="term" value="P:proteolysis"/>
    <property type="evidence" value="ECO:0000318"/>
    <property type="project" value="GO_Central"/>
</dbReference>
<dbReference type="CDD" id="cd05676">
    <property type="entry name" value="M20_dipept_like_CNDP"/>
    <property type="match status" value="1"/>
</dbReference>
<dbReference type="FunFam" id="3.30.70.360:FF:000008">
    <property type="entry name" value="Cytosolic non-specific dipeptidase"/>
    <property type="match status" value="1"/>
</dbReference>
<dbReference type="Gene3D" id="3.30.70.360">
    <property type="match status" value="1"/>
</dbReference>
<dbReference type="Gene3D" id="3.40.630.10">
    <property type="entry name" value="Zn peptidases"/>
    <property type="match status" value="1"/>
</dbReference>
<dbReference type="InterPro" id="IPR017153">
    <property type="entry name" value="CNDP/DUG1"/>
</dbReference>
<dbReference type="InterPro" id="IPR051458">
    <property type="entry name" value="Cyt/Met_Dipeptidase"/>
</dbReference>
<dbReference type="InterPro" id="IPR002933">
    <property type="entry name" value="Peptidase_M20"/>
</dbReference>
<dbReference type="InterPro" id="IPR011650">
    <property type="entry name" value="Peptidase_M20_dimer"/>
</dbReference>
<dbReference type="PANTHER" id="PTHR43270">
    <property type="entry name" value="BETA-ALA-HIS DIPEPTIDASE"/>
    <property type="match status" value="1"/>
</dbReference>
<dbReference type="PANTHER" id="PTHR43270:SF4">
    <property type="entry name" value="CARNOSINE DIPEPTIDASE 2, ISOFORM A"/>
    <property type="match status" value="1"/>
</dbReference>
<dbReference type="Pfam" id="PF07687">
    <property type="entry name" value="M20_dimer"/>
    <property type="match status" value="1"/>
</dbReference>
<dbReference type="Pfam" id="PF01546">
    <property type="entry name" value="Peptidase_M20"/>
    <property type="match status" value="1"/>
</dbReference>
<dbReference type="PIRSF" id="PIRSF037242">
    <property type="entry name" value="CNDP_dipeptidase"/>
    <property type="match status" value="1"/>
</dbReference>
<dbReference type="SUPFAM" id="SSF53187">
    <property type="entry name" value="Zn-dependent exopeptidases"/>
    <property type="match status" value="1"/>
</dbReference>
<keyword id="KW-0002">3D-structure</keyword>
<keyword id="KW-0963">Cytoplasm</keyword>
<keyword id="KW-0224">Dipeptidase</keyword>
<keyword id="KW-0378">Hydrolase</keyword>
<keyword id="KW-0464">Manganese</keyword>
<keyword id="KW-0479">Metal-binding</keyword>
<keyword id="KW-0482">Metalloprotease</keyword>
<keyword id="KW-0496">Mitochondrion</keyword>
<keyword id="KW-0597">Phosphoprotein</keyword>
<keyword id="KW-0645">Protease</keyword>
<keyword id="KW-1185">Reference proteome</keyword>
<keyword id="KW-0862">Zinc</keyword>
<sequence>MSHSLTSVFQKIDSLKPQFFSRLTKAIQIPAVSSDESLRSKVFDKAKFISEQLSQSGFHDIKMVDLGIQPPPISTPNLSLPPVILSRFGSDPSKKTVLVYGHYDVQPAQLEDGWDTEPFKLVIDEAKGIMKGRGVTDDTGPLLSWINVVDAFKASGQEFPVNLVTCFEGMEESGSLKLDELIKKEANGYFKGVDAVCISDNYWLGTKKPVLTYGLRGCNYYQTIIEGPSADLHSGIFGGVVAEPMIDLMQVLGSLVDSKGKILIDGIDEMVAPLTEKEKALYKDIEFSVEELNAATGSKTSLYDKKEDILMHRWRYPSLSIHGVEGAFSAQGAKTVIPAKVFGKFSIRTVPDMDSEKLTSLVQKHCDAKFKSLNSPNKCRTELIHDGAYWVSDPFNAQFTAAKKATKLVYGVDPDFTREGGSIPITLTFQDALNTSVLLLPMGRGDDGAHSINEKLDISNFVGGMKTMAAYLQYYSESPEN</sequence>